<proteinExistence type="inferred from homology"/>
<dbReference type="EC" id="3.1.11.6" evidence="1"/>
<dbReference type="EMBL" id="CP001127">
    <property type="protein sequence ID" value="ACF92443.1"/>
    <property type="molecule type" value="Genomic_DNA"/>
</dbReference>
<dbReference type="RefSeq" id="WP_001124944.1">
    <property type="nucleotide sequence ID" value="NC_011094.1"/>
</dbReference>
<dbReference type="SMR" id="B4TMA4"/>
<dbReference type="KEGG" id="sew:SeSA_A0484"/>
<dbReference type="HOGENOM" id="CLU_145918_3_3_6"/>
<dbReference type="Proteomes" id="UP000001865">
    <property type="component" value="Chromosome"/>
</dbReference>
<dbReference type="GO" id="GO:0005829">
    <property type="term" value="C:cytosol"/>
    <property type="evidence" value="ECO:0007669"/>
    <property type="project" value="TreeGrafter"/>
</dbReference>
<dbReference type="GO" id="GO:0009318">
    <property type="term" value="C:exodeoxyribonuclease VII complex"/>
    <property type="evidence" value="ECO:0007669"/>
    <property type="project" value="InterPro"/>
</dbReference>
<dbReference type="GO" id="GO:0008855">
    <property type="term" value="F:exodeoxyribonuclease VII activity"/>
    <property type="evidence" value="ECO:0007669"/>
    <property type="project" value="UniProtKB-UniRule"/>
</dbReference>
<dbReference type="GO" id="GO:0006308">
    <property type="term" value="P:DNA catabolic process"/>
    <property type="evidence" value="ECO:0007669"/>
    <property type="project" value="UniProtKB-UniRule"/>
</dbReference>
<dbReference type="FunFam" id="1.10.287.1040:FF:000001">
    <property type="entry name" value="Exodeoxyribonuclease 7 small subunit"/>
    <property type="match status" value="1"/>
</dbReference>
<dbReference type="Gene3D" id="1.10.287.1040">
    <property type="entry name" value="Exonuclease VII, small subunit"/>
    <property type="match status" value="1"/>
</dbReference>
<dbReference type="HAMAP" id="MF_00337">
    <property type="entry name" value="Exonuc_7_S"/>
    <property type="match status" value="1"/>
</dbReference>
<dbReference type="InterPro" id="IPR003761">
    <property type="entry name" value="Exonuc_VII_S"/>
</dbReference>
<dbReference type="InterPro" id="IPR037004">
    <property type="entry name" value="Exonuc_VII_ssu_sf"/>
</dbReference>
<dbReference type="NCBIfam" id="NF002137">
    <property type="entry name" value="PRK00977.1-1"/>
    <property type="match status" value="1"/>
</dbReference>
<dbReference type="NCBIfam" id="NF002140">
    <property type="entry name" value="PRK00977.1-4"/>
    <property type="match status" value="1"/>
</dbReference>
<dbReference type="NCBIfam" id="TIGR01280">
    <property type="entry name" value="xseB"/>
    <property type="match status" value="1"/>
</dbReference>
<dbReference type="PANTHER" id="PTHR34137">
    <property type="entry name" value="EXODEOXYRIBONUCLEASE 7 SMALL SUBUNIT"/>
    <property type="match status" value="1"/>
</dbReference>
<dbReference type="PANTHER" id="PTHR34137:SF1">
    <property type="entry name" value="EXODEOXYRIBONUCLEASE 7 SMALL SUBUNIT"/>
    <property type="match status" value="1"/>
</dbReference>
<dbReference type="Pfam" id="PF02609">
    <property type="entry name" value="Exonuc_VII_S"/>
    <property type="match status" value="1"/>
</dbReference>
<dbReference type="PIRSF" id="PIRSF006488">
    <property type="entry name" value="Exonuc_VII_S"/>
    <property type="match status" value="1"/>
</dbReference>
<dbReference type="SUPFAM" id="SSF116842">
    <property type="entry name" value="XseB-like"/>
    <property type="match status" value="1"/>
</dbReference>
<gene>
    <name evidence="1" type="primary">xseB</name>
    <name type="ordered locus">SeSA_A0484</name>
</gene>
<comment type="function">
    <text evidence="1">Bidirectionally degrades single-stranded DNA into large acid-insoluble oligonucleotides, which are then degraded further into small acid-soluble oligonucleotides.</text>
</comment>
<comment type="catalytic activity">
    <reaction evidence="1">
        <text>Exonucleolytic cleavage in either 5'- to 3'- or 3'- to 5'-direction to yield nucleoside 5'-phosphates.</text>
        <dbReference type="EC" id="3.1.11.6"/>
    </reaction>
</comment>
<comment type="subunit">
    <text evidence="1">Heterooligomer composed of large and small subunits.</text>
</comment>
<comment type="subcellular location">
    <subcellularLocation>
        <location evidence="1">Cytoplasm</location>
    </subcellularLocation>
</comment>
<comment type="similarity">
    <text evidence="1">Belongs to the XseB family.</text>
</comment>
<organism>
    <name type="scientific">Salmonella schwarzengrund (strain CVM19633)</name>
    <dbReference type="NCBI Taxonomy" id="439843"/>
    <lineage>
        <taxon>Bacteria</taxon>
        <taxon>Pseudomonadati</taxon>
        <taxon>Pseudomonadota</taxon>
        <taxon>Gammaproteobacteria</taxon>
        <taxon>Enterobacterales</taxon>
        <taxon>Enterobacteriaceae</taxon>
        <taxon>Salmonella</taxon>
    </lineage>
</organism>
<sequence length="80" mass="8932">MPKKNEAPASFETALSELEHIVTRLESGDLPLEDALNEFERGVQLARQGQAKLQQAEQRVQILLSDNEEASPEPFIADNE</sequence>
<reference key="1">
    <citation type="journal article" date="2011" name="J. Bacteriol.">
        <title>Comparative genomics of 28 Salmonella enterica isolates: evidence for CRISPR-mediated adaptive sublineage evolution.</title>
        <authorList>
            <person name="Fricke W.F."/>
            <person name="Mammel M.K."/>
            <person name="McDermott P.F."/>
            <person name="Tartera C."/>
            <person name="White D.G."/>
            <person name="Leclerc J.E."/>
            <person name="Ravel J."/>
            <person name="Cebula T.A."/>
        </authorList>
    </citation>
    <scope>NUCLEOTIDE SEQUENCE [LARGE SCALE GENOMIC DNA]</scope>
    <source>
        <strain>CVM19633</strain>
    </source>
</reference>
<accession>B4TMA4</accession>
<protein>
    <recommendedName>
        <fullName evidence="1">Exodeoxyribonuclease 7 small subunit</fullName>
        <ecNumber evidence="1">3.1.11.6</ecNumber>
    </recommendedName>
    <alternativeName>
        <fullName evidence="1">Exodeoxyribonuclease VII small subunit</fullName>
        <shortName evidence="1">Exonuclease VII small subunit</shortName>
    </alternativeName>
</protein>
<keyword id="KW-0963">Cytoplasm</keyword>
<keyword id="KW-0269">Exonuclease</keyword>
<keyword id="KW-0378">Hydrolase</keyword>
<keyword id="KW-0540">Nuclease</keyword>
<name>EX7S_SALSV</name>
<feature type="chain" id="PRO_1000119956" description="Exodeoxyribonuclease 7 small subunit">
    <location>
        <begin position="1"/>
        <end position="80"/>
    </location>
</feature>
<evidence type="ECO:0000255" key="1">
    <source>
        <dbReference type="HAMAP-Rule" id="MF_00337"/>
    </source>
</evidence>